<organism>
    <name type="scientific">Shewanella amazonensis (strain ATCC BAA-1098 / SB2B)</name>
    <dbReference type="NCBI Taxonomy" id="326297"/>
    <lineage>
        <taxon>Bacteria</taxon>
        <taxon>Pseudomonadati</taxon>
        <taxon>Pseudomonadota</taxon>
        <taxon>Gammaproteobacteria</taxon>
        <taxon>Alteromonadales</taxon>
        <taxon>Shewanellaceae</taxon>
        <taxon>Shewanella</taxon>
    </lineage>
</organism>
<feature type="chain" id="PRO_0000319228" description="Formate-dependent phosphoribosylglycinamide formyltransferase">
    <location>
        <begin position="1"/>
        <end position="392"/>
    </location>
</feature>
<feature type="domain" description="ATP-grasp" evidence="1">
    <location>
        <begin position="117"/>
        <end position="306"/>
    </location>
</feature>
<feature type="binding site" evidence="1">
    <location>
        <begin position="20"/>
        <end position="21"/>
    </location>
    <ligand>
        <name>N(1)-(5-phospho-beta-D-ribosyl)glycinamide</name>
        <dbReference type="ChEBI" id="CHEBI:143788"/>
    </ligand>
</feature>
<feature type="binding site" evidence="1">
    <location>
        <position position="80"/>
    </location>
    <ligand>
        <name>N(1)-(5-phospho-beta-D-ribosyl)glycinamide</name>
        <dbReference type="ChEBI" id="CHEBI:143788"/>
    </ligand>
</feature>
<feature type="binding site" evidence="1">
    <location>
        <position position="112"/>
    </location>
    <ligand>
        <name>ATP</name>
        <dbReference type="ChEBI" id="CHEBI:30616"/>
    </ligand>
</feature>
<feature type="binding site" evidence="1">
    <location>
        <position position="153"/>
    </location>
    <ligand>
        <name>ATP</name>
        <dbReference type="ChEBI" id="CHEBI:30616"/>
    </ligand>
</feature>
<feature type="binding site" evidence="1">
    <location>
        <begin position="158"/>
        <end position="163"/>
    </location>
    <ligand>
        <name>ATP</name>
        <dbReference type="ChEBI" id="CHEBI:30616"/>
    </ligand>
</feature>
<feature type="binding site" evidence="1">
    <location>
        <begin position="193"/>
        <end position="196"/>
    </location>
    <ligand>
        <name>ATP</name>
        <dbReference type="ChEBI" id="CHEBI:30616"/>
    </ligand>
</feature>
<feature type="binding site" evidence="1">
    <location>
        <position position="201"/>
    </location>
    <ligand>
        <name>ATP</name>
        <dbReference type="ChEBI" id="CHEBI:30616"/>
    </ligand>
</feature>
<feature type="binding site" evidence="1">
    <location>
        <position position="265"/>
    </location>
    <ligand>
        <name>Mg(2+)</name>
        <dbReference type="ChEBI" id="CHEBI:18420"/>
    </ligand>
</feature>
<feature type="binding site" evidence="1">
    <location>
        <position position="277"/>
    </location>
    <ligand>
        <name>Mg(2+)</name>
        <dbReference type="ChEBI" id="CHEBI:18420"/>
    </ligand>
</feature>
<feature type="binding site" evidence="1">
    <location>
        <position position="284"/>
    </location>
    <ligand>
        <name>N(1)-(5-phospho-beta-D-ribosyl)glycinamide</name>
        <dbReference type="ChEBI" id="CHEBI:143788"/>
    </ligand>
</feature>
<feature type="binding site" evidence="1">
    <location>
        <position position="354"/>
    </location>
    <ligand>
        <name>N(1)-(5-phospho-beta-D-ribosyl)glycinamide</name>
        <dbReference type="ChEBI" id="CHEBI:143788"/>
    </ligand>
</feature>
<feature type="binding site" evidence="1">
    <location>
        <begin position="361"/>
        <end position="362"/>
    </location>
    <ligand>
        <name>N(1)-(5-phospho-beta-D-ribosyl)glycinamide</name>
        <dbReference type="ChEBI" id="CHEBI:143788"/>
    </ligand>
</feature>
<proteinExistence type="inferred from homology"/>
<reference key="1">
    <citation type="submission" date="2006-12" db="EMBL/GenBank/DDBJ databases">
        <title>Complete sequence of Shewanella amazonensis SB2B.</title>
        <authorList>
            <consortium name="US DOE Joint Genome Institute"/>
            <person name="Copeland A."/>
            <person name="Lucas S."/>
            <person name="Lapidus A."/>
            <person name="Barry K."/>
            <person name="Detter J.C."/>
            <person name="Glavina del Rio T."/>
            <person name="Hammon N."/>
            <person name="Israni S."/>
            <person name="Dalin E."/>
            <person name="Tice H."/>
            <person name="Pitluck S."/>
            <person name="Munk A.C."/>
            <person name="Brettin T."/>
            <person name="Bruce D."/>
            <person name="Han C."/>
            <person name="Tapia R."/>
            <person name="Gilna P."/>
            <person name="Schmutz J."/>
            <person name="Larimer F."/>
            <person name="Land M."/>
            <person name="Hauser L."/>
            <person name="Kyrpides N."/>
            <person name="Mikhailova N."/>
            <person name="Fredrickson J."/>
            <person name="Richardson P."/>
        </authorList>
    </citation>
    <scope>NUCLEOTIDE SEQUENCE [LARGE SCALE GENOMIC DNA]</scope>
    <source>
        <strain>ATCC BAA-1098 / SB2B</strain>
    </source>
</reference>
<evidence type="ECO:0000255" key="1">
    <source>
        <dbReference type="HAMAP-Rule" id="MF_01643"/>
    </source>
</evidence>
<dbReference type="EC" id="6.3.1.21" evidence="1"/>
<dbReference type="EMBL" id="CP000507">
    <property type="protein sequence ID" value="ABM01010.1"/>
    <property type="molecule type" value="Genomic_DNA"/>
</dbReference>
<dbReference type="RefSeq" id="WP_011760915.1">
    <property type="nucleotide sequence ID" value="NC_008700.1"/>
</dbReference>
<dbReference type="SMR" id="A1S9F3"/>
<dbReference type="STRING" id="326297.Sama_2807"/>
<dbReference type="KEGG" id="saz:Sama_2807"/>
<dbReference type="eggNOG" id="COG0027">
    <property type="taxonomic scope" value="Bacteria"/>
</dbReference>
<dbReference type="HOGENOM" id="CLU_011534_1_3_6"/>
<dbReference type="OrthoDB" id="9804625at2"/>
<dbReference type="UniPathway" id="UPA00074">
    <property type="reaction ID" value="UER00127"/>
</dbReference>
<dbReference type="Proteomes" id="UP000009175">
    <property type="component" value="Chromosome"/>
</dbReference>
<dbReference type="GO" id="GO:0005829">
    <property type="term" value="C:cytosol"/>
    <property type="evidence" value="ECO:0007669"/>
    <property type="project" value="TreeGrafter"/>
</dbReference>
<dbReference type="GO" id="GO:0005524">
    <property type="term" value="F:ATP binding"/>
    <property type="evidence" value="ECO:0007669"/>
    <property type="project" value="UniProtKB-UniRule"/>
</dbReference>
<dbReference type="GO" id="GO:0000287">
    <property type="term" value="F:magnesium ion binding"/>
    <property type="evidence" value="ECO:0007669"/>
    <property type="project" value="InterPro"/>
</dbReference>
<dbReference type="GO" id="GO:0043815">
    <property type="term" value="F:phosphoribosylglycinamide formyltransferase 2 activity"/>
    <property type="evidence" value="ECO:0007669"/>
    <property type="project" value="UniProtKB-UniRule"/>
</dbReference>
<dbReference type="GO" id="GO:0004644">
    <property type="term" value="F:phosphoribosylglycinamide formyltransferase activity"/>
    <property type="evidence" value="ECO:0007669"/>
    <property type="project" value="InterPro"/>
</dbReference>
<dbReference type="GO" id="GO:0006189">
    <property type="term" value="P:'de novo' IMP biosynthetic process"/>
    <property type="evidence" value="ECO:0007669"/>
    <property type="project" value="UniProtKB-UniRule"/>
</dbReference>
<dbReference type="FunFam" id="3.30.1490.20:FF:000013">
    <property type="entry name" value="Formate-dependent phosphoribosylglycinamide formyltransferase"/>
    <property type="match status" value="1"/>
</dbReference>
<dbReference type="FunFam" id="3.30.470.20:FF:000027">
    <property type="entry name" value="Formate-dependent phosphoribosylglycinamide formyltransferase"/>
    <property type="match status" value="1"/>
</dbReference>
<dbReference type="FunFam" id="3.40.50.20:FF:000007">
    <property type="entry name" value="Formate-dependent phosphoribosylglycinamide formyltransferase"/>
    <property type="match status" value="1"/>
</dbReference>
<dbReference type="Gene3D" id="3.40.50.20">
    <property type="match status" value="1"/>
</dbReference>
<dbReference type="Gene3D" id="3.30.1490.20">
    <property type="entry name" value="ATP-grasp fold, A domain"/>
    <property type="match status" value="1"/>
</dbReference>
<dbReference type="Gene3D" id="3.30.470.20">
    <property type="entry name" value="ATP-grasp fold, B domain"/>
    <property type="match status" value="1"/>
</dbReference>
<dbReference type="HAMAP" id="MF_01643">
    <property type="entry name" value="PurT"/>
    <property type="match status" value="1"/>
</dbReference>
<dbReference type="InterPro" id="IPR011761">
    <property type="entry name" value="ATP-grasp"/>
</dbReference>
<dbReference type="InterPro" id="IPR003135">
    <property type="entry name" value="ATP-grasp_carboxylate-amine"/>
</dbReference>
<dbReference type="InterPro" id="IPR013815">
    <property type="entry name" value="ATP_grasp_subdomain_1"/>
</dbReference>
<dbReference type="InterPro" id="IPR016185">
    <property type="entry name" value="PreATP-grasp_dom_sf"/>
</dbReference>
<dbReference type="InterPro" id="IPR005862">
    <property type="entry name" value="PurT"/>
</dbReference>
<dbReference type="InterPro" id="IPR054350">
    <property type="entry name" value="PurT/PurK_preATP-grasp"/>
</dbReference>
<dbReference type="InterPro" id="IPR048740">
    <property type="entry name" value="PurT_C"/>
</dbReference>
<dbReference type="InterPro" id="IPR011054">
    <property type="entry name" value="Rudment_hybrid_motif"/>
</dbReference>
<dbReference type="NCBIfam" id="NF006766">
    <property type="entry name" value="PRK09288.1"/>
    <property type="match status" value="1"/>
</dbReference>
<dbReference type="NCBIfam" id="TIGR01142">
    <property type="entry name" value="purT"/>
    <property type="match status" value="1"/>
</dbReference>
<dbReference type="PANTHER" id="PTHR43055">
    <property type="entry name" value="FORMATE-DEPENDENT PHOSPHORIBOSYLGLYCINAMIDE FORMYLTRANSFERASE"/>
    <property type="match status" value="1"/>
</dbReference>
<dbReference type="PANTHER" id="PTHR43055:SF1">
    <property type="entry name" value="FORMATE-DEPENDENT PHOSPHORIBOSYLGLYCINAMIDE FORMYLTRANSFERASE"/>
    <property type="match status" value="1"/>
</dbReference>
<dbReference type="Pfam" id="PF02222">
    <property type="entry name" value="ATP-grasp"/>
    <property type="match status" value="1"/>
</dbReference>
<dbReference type="Pfam" id="PF21244">
    <property type="entry name" value="PurT_C"/>
    <property type="match status" value="1"/>
</dbReference>
<dbReference type="Pfam" id="PF22660">
    <property type="entry name" value="RS_preATP-grasp-like"/>
    <property type="match status" value="1"/>
</dbReference>
<dbReference type="SUPFAM" id="SSF56059">
    <property type="entry name" value="Glutathione synthetase ATP-binding domain-like"/>
    <property type="match status" value="1"/>
</dbReference>
<dbReference type="SUPFAM" id="SSF52440">
    <property type="entry name" value="PreATP-grasp domain"/>
    <property type="match status" value="1"/>
</dbReference>
<dbReference type="SUPFAM" id="SSF51246">
    <property type="entry name" value="Rudiment single hybrid motif"/>
    <property type="match status" value="1"/>
</dbReference>
<dbReference type="PROSITE" id="PS50975">
    <property type="entry name" value="ATP_GRASP"/>
    <property type="match status" value="1"/>
</dbReference>
<keyword id="KW-0067">ATP-binding</keyword>
<keyword id="KW-0436">Ligase</keyword>
<keyword id="KW-0460">Magnesium</keyword>
<keyword id="KW-0479">Metal-binding</keyword>
<keyword id="KW-0547">Nucleotide-binding</keyword>
<keyword id="KW-0658">Purine biosynthesis</keyword>
<keyword id="KW-1185">Reference proteome</keyword>
<accession>A1S9F3</accession>
<comment type="function">
    <text evidence="1">Involved in the de novo purine biosynthesis. Catalyzes the transfer of formate to 5-phospho-ribosyl-glycinamide (GAR), producing 5-phospho-ribosyl-N-formylglycinamide (FGAR). Formate is provided by PurU via hydrolysis of 10-formyl-tetrahydrofolate.</text>
</comment>
<comment type="catalytic activity">
    <reaction evidence="1">
        <text>N(1)-(5-phospho-beta-D-ribosyl)glycinamide + formate + ATP = N(2)-formyl-N(1)-(5-phospho-beta-D-ribosyl)glycinamide + ADP + phosphate + H(+)</text>
        <dbReference type="Rhea" id="RHEA:24829"/>
        <dbReference type="ChEBI" id="CHEBI:15378"/>
        <dbReference type="ChEBI" id="CHEBI:15740"/>
        <dbReference type="ChEBI" id="CHEBI:30616"/>
        <dbReference type="ChEBI" id="CHEBI:43474"/>
        <dbReference type="ChEBI" id="CHEBI:143788"/>
        <dbReference type="ChEBI" id="CHEBI:147286"/>
        <dbReference type="ChEBI" id="CHEBI:456216"/>
        <dbReference type="EC" id="6.3.1.21"/>
    </reaction>
    <physiologicalReaction direction="left-to-right" evidence="1">
        <dbReference type="Rhea" id="RHEA:24830"/>
    </physiologicalReaction>
</comment>
<comment type="pathway">
    <text evidence="1">Purine metabolism; IMP biosynthesis via de novo pathway; N(2)-formyl-N(1)-(5-phospho-D-ribosyl)glycinamide from N(1)-(5-phospho-D-ribosyl)glycinamide (formate route): step 1/1.</text>
</comment>
<comment type="subunit">
    <text evidence="1">Homodimer.</text>
</comment>
<comment type="similarity">
    <text evidence="1">Belongs to the PurK/PurT family.</text>
</comment>
<sequence>MIGTPYTQGATRAMLLGSGELGKEVAIELQRLGVEVIAVDRYPNAPAMQVAHRSHVINMLDGEALKALIASEKPHLVIPEIEAIATQTLVELEAEGLKVVPTARATRLTMDREGIRRLAAETLALPTSPYVFCDSLTELQAALKVTGIPCVVKPVMSSSGKGQSVIRSPGDVQKAWDYAQSGGRAGEGRIIVEGFIDFDYEITLLTISAVDGIHFCAPIGHRQEDGDYRESWQPQAMSSLALDRAQHIAREVVQNLGGFGLFGVELFIKGDEVYFSEVSPRPHDTGMVTLISQDLSEFALHVRAILGLPVGTIVQRGPSASAVILVEGESSNIGYSGLAEALAQPNTQLRLFAKPEIHGRRRLGVALARGTSIDEALQTALASAGCIKVHFN</sequence>
<gene>
    <name evidence="1" type="primary">purT</name>
    <name type="ordered locus">Sama_2807</name>
</gene>
<name>PURT_SHEAM</name>
<protein>
    <recommendedName>
        <fullName evidence="1">Formate-dependent phosphoribosylglycinamide formyltransferase</fullName>
        <ecNumber evidence="1">6.3.1.21</ecNumber>
    </recommendedName>
    <alternativeName>
        <fullName evidence="1">5'-phosphoribosylglycinamide transformylase 2</fullName>
    </alternativeName>
    <alternativeName>
        <fullName evidence="1">Formate-dependent GAR transformylase</fullName>
    </alternativeName>
    <alternativeName>
        <fullName evidence="1">GAR transformylase 2</fullName>
        <shortName evidence="1">GART 2</shortName>
    </alternativeName>
    <alternativeName>
        <fullName evidence="1">Non-folate glycinamide ribonucleotide transformylase</fullName>
    </alternativeName>
    <alternativeName>
        <fullName evidence="1">Phosphoribosylglycinamide formyltransferase 2</fullName>
    </alternativeName>
</protein>